<evidence type="ECO:0000255" key="1">
    <source>
        <dbReference type="HAMAP-Rule" id="MF_00052"/>
    </source>
</evidence>
<evidence type="ECO:0000255" key="2">
    <source>
        <dbReference type="PROSITE-ProRule" id="PRU01319"/>
    </source>
</evidence>
<feature type="chain" id="PRO_0000334923" description="Ribonuclease HII">
    <location>
        <begin position="1"/>
        <end position="208"/>
    </location>
</feature>
<feature type="domain" description="RNase H type-2" evidence="2">
    <location>
        <begin position="5"/>
        <end position="198"/>
    </location>
</feature>
<feature type="binding site" evidence="1">
    <location>
        <position position="11"/>
    </location>
    <ligand>
        <name>a divalent metal cation</name>
        <dbReference type="ChEBI" id="CHEBI:60240"/>
    </ligand>
</feature>
<feature type="binding site" evidence="1">
    <location>
        <position position="12"/>
    </location>
    <ligand>
        <name>a divalent metal cation</name>
        <dbReference type="ChEBI" id="CHEBI:60240"/>
    </ligand>
</feature>
<feature type="binding site" evidence="1">
    <location>
        <position position="106"/>
    </location>
    <ligand>
        <name>a divalent metal cation</name>
        <dbReference type="ChEBI" id="CHEBI:60240"/>
    </ligand>
</feature>
<keyword id="KW-0963">Cytoplasm</keyword>
<keyword id="KW-0255">Endonuclease</keyword>
<keyword id="KW-0378">Hydrolase</keyword>
<keyword id="KW-0464">Manganese</keyword>
<keyword id="KW-0479">Metal-binding</keyword>
<keyword id="KW-0540">Nuclease</keyword>
<organism>
    <name type="scientific">Microcystis aeruginosa (strain NIES-843 / IAM M-2473)</name>
    <dbReference type="NCBI Taxonomy" id="449447"/>
    <lineage>
        <taxon>Bacteria</taxon>
        <taxon>Bacillati</taxon>
        <taxon>Cyanobacteriota</taxon>
        <taxon>Cyanophyceae</taxon>
        <taxon>Oscillatoriophycideae</taxon>
        <taxon>Chroococcales</taxon>
        <taxon>Microcystaceae</taxon>
        <taxon>Microcystis</taxon>
    </lineage>
</organism>
<reference key="1">
    <citation type="journal article" date="2007" name="DNA Res.">
        <title>Complete genomic structure of the bloom-forming toxic cyanobacterium Microcystis aeruginosa NIES-843.</title>
        <authorList>
            <person name="Kaneko T."/>
            <person name="Nakajima N."/>
            <person name="Okamoto S."/>
            <person name="Suzuki I."/>
            <person name="Tanabe Y."/>
            <person name="Tamaoki M."/>
            <person name="Nakamura Y."/>
            <person name="Kasai F."/>
            <person name="Watanabe A."/>
            <person name="Kawashima K."/>
            <person name="Kishida Y."/>
            <person name="Ono A."/>
            <person name="Shimizu Y."/>
            <person name="Takahashi C."/>
            <person name="Minami C."/>
            <person name="Fujishiro T."/>
            <person name="Kohara M."/>
            <person name="Katoh M."/>
            <person name="Nakazaki N."/>
            <person name="Nakayama S."/>
            <person name="Yamada M."/>
            <person name="Tabata S."/>
            <person name="Watanabe M.M."/>
        </authorList>
    </citation>
    <scope>NUCLEOTIDE SEQUENCE [LARGE SCALE GENOMIC DNA]</scope>
    <source>
        <strain>NIES-843 / IAM M-247</strain>
    </source>
</reference>
<proteinExistence type="inferred from homology"/>
<dbReference type="EC" id="3.1.26.4" evidence="1"/>
<dbReference type="EMBL" id="AP009552">
    <property type="protein sequence ID" value="BAG01343.1"/>
    <property type="molecule type" value="Genomic_DNA"/>
</dbReference>
<dbReference type="RefSeq" id="WP_002798654.1">
    <property type="nucleotide sequence ID" value="NC_010296.1"/>
</dbReference>
<dbReference type="SMR" id="B0JV09"/>
<dbReference type="STRING" id="449447.MAE_15210"/>
<dbReference type="PaxDb" id="449447-MAE_15210"/>
<dbReference type="EnsemblBacteria" id="BAG01343">
    <property type="protein sequence ID" value="BAG01343"/>
    <property type="gene ID" value="MAE_15210"/>
</dbReference>
<dbReference type="KEGG" id="mar:MAE_15210"/>
<dbReference type="eggNOG" id="COG0164">
    <property type="taxonomic scope" value="Bacteria"/>
</dbReference>
<dbReference type="HOGENOM" id="CLU_036532_3_2_3"/>
<dbReference type="BioCyc" id="MAER449447:MAE_RS06700-MONOMER"/>
<dbReference type="Proteomes" id="UP000001510">
    <property type="component" value="Chromosome"/>
</dbReference>
<dbReference type="GO" id="GO:0005737">
    <property type="term" value="C:cytoplasm"/>
    <property type="evidence" value="ECO:0007669"/>
    <property type="project" value="UniProtKB-SubCell"/>
</dbReference>
<dbReference type="GO" id="GO:0032299">
    <property type="term" value="C:ribonuclease H2 complex"/>
    <property type="evidence" value="ECO:0007669"/>
    <property type="project" value="TreeGrafter"/>
</dbReference>
<dbReference type="GO" id="GO:0030145">
    <property type="term" value="F:manganese ion binding"/>
    <property type="evidence" value="ECO:0007669"/>
    <property type="project" value="UniProtKB-UniRule"/>
</dbReference>
<dbReference type="GO" id="GO:0003723">
    <property type="term" value="F:RNA binding"/>
    <property type="evidence" value="ECO:0007669"/>
    <property type="project" value="InterPro"/>
</dbReference>
<dbReference type="GO" id="GO:0004523">
    <property type="term" value="F:RNA-DNA hybrid ribonuclease activity"/>
    <property type="evidence" value="ECO:0007669"/>
    <property type="project" value="UniProtKB-UniRule"/>
</dbReference>
<dbReference type="GO" id="GO:0043137">
    <property type="term" value="P:DNA replication, removal of RNA primer"/>
    <property type="evidence" value="ECO:0007669"/>
    <property type="project" value="TreeGrafter"/>
</dbReference>
<dbReference type="GO" id="GO:0006298">
    <property type="term" value="P:mismatch repair"/>
    <property type="evidence" value="ECO:0007669"/>
    <property type="project" value="TreeGrafter"/>
</dbReference>
<dbReference type="CDD" id="cd07182">
    <property type="entry name" value="RNase_HII_bacteria_HII_like"/>
    <property type="match status" value="1"/>
</dbReference>
<dbReference type="Gene3D" id="3.30.420.10">
    <property type="entry name" value="Ribonuclease H-like superfamily/Ribonuclease H"/>
    <property type="match status" value="1"/>
</dbReference>
<dbReference type="HAMAP" id="MF_00052_B">
    <property type="entry name" value="RNase_HII_B"/>
    <property type="match status" value="1"/>
</dbReference>
<dbReference type="InterPro" id="IPR022898">
    <property type="entry name" value="RNase_HII"/>
</dbReference>
<dbReference type="InterPro" id="IPR001352">
    <property type="entry name" value="RNase_HII/HIII"/>
</dbReference>
<dbReference type="InterPro" id="IPR024567">
    <property type="entry name" value="RNase_HII/HIII_dom"/>
</dbReference>
<dbReference type="InterPro" id="IPR012337">
    <property type="entry name" value="RNaseH-like_sf"/>
</dbReference>
<dbReference type="InterPro" id="IPR036397">
    <property type="entry name" value="RNaseH_sf"/>
</dbReference>
<dbReference type="NCBIfam" id="NF000595">
    <property type="entry name" value="PRK00015.1-3"/>
    <property type="match status" value="1"/>
</dbReference>
<dbReference type="PANTHER" id="PTHR10954">
    <property type="entry name" value="RIBONUCLEASE H2 SUBUNIT A"/>
    <property type="match status" value="1"/>
</dbReference>
<dbReference type="PANTHER" id="PTHR10954:SF18">
    <property type="entry name" value="RIBONUCLEASE HII"/>
    <property type="match status" value="1"/>
</dbReference>
<dbReference type="Pfam" id="PF01351">
    <property type="entry name" value="RNase_HII"/>
    <property type="match status" value="1"/>
</dbReference>
<dbReference type="SUPFAM" id="SSF53098">
    <property type="entry name" value="Ribonuclease H-like"/>
    <property type="match status" value="1"/>
</dbReference>
<dbReference type="PROSITE" id="PS51975">
    <property type="entry name" value="RNASE_H_2"/>
    <property type="match status" value="1"/>
</dbReference>
<protein>
    <recommendedName>
        <fullName evidence="1">Ribonuclease HII</fullName>
        <shortName evidence="1">RNase HII</shortName>
        <ecNumber evidence="1">3.1.26.4</ecNumber>
    </recommendedName>
</protein>
<sequence length="208" mass="23113">MSAEPLIAGVDEVGRGALFGPVVAAVVVTVPSGFARLWELGVKDSKQLSPQKRQKLSRQIQRDFVCRIGYATVKEIDRLNIFHASLLAMSRAIGKLPLSPSLCWVDGKHIIKDLSIPQKAVIQGDQQSPVIAAASIVAKVWRDDLITRWHRRYPDYGLARHKGYGTAQHLEAIGNYGLTSQHRLSFSPCQPRLEHDCRTICPRVIEIS</sequence>
<name>RNH2_MICAN</name>
<comment type="function">
    <text evidence="1">Endonuclease that specifically degrades the RNA of RNA-DNA hybrids.</text>
</comment>
<comment type="catalytic activity">
    <reaction evidence="1">
        <text>Endonucleolytic cleavage to 5'-phosphomonoester.</text>
        <dbReference type="EC" id="3.1.26.4"/>
    </reaction>
</comment>
<comment type="cofactor">
    <cofactor evidence="1">
        <name>Mn(2+)</name>
        <dbReference type="ChEBI" id="CHEBI:29035"/>
    </cofactor>
    <cofactor evidence="1">
        <name>Mg(2+)</name>
        <dbReference type="ChEBI" id="CHEBI:18420"/>
    </cofactor>
    <text evidence="1">Manganese or magnesium. Binds 1 divalent metal ion per monomer in the absence of substrate. May bind a second metal ion after substrate binding.</text>
</comment>
<comment type="subcellular location">
    <subcellularLocation>
        <location evidence="1">Cytoplasm</location>
    </subcellularLocation>
</comment>
<comment type="similarity">
    <text evidence="1">Belongs to the RNase HII family.</text>
</comment>
<accession>B0JV09</accession>
<gene>
    <name evidence="1" type="primary">rnhB</name>
    <name type="ordered locus">MAE_15210</name>
</gene>